<comment type="function">
    <text>Stabilizes the interaction between PsaC and the PSI core, assists the docking of the ferredoxin to PSI and interacts with ferredoxin-NADP oxidoreductase.</text>
</comment>
<comment type="subcellular location">
    <subcellularLocation>
        <location evidence="1">Cellular thylakoid membrane</location>
        <topology evidence="1">Peripheral membrane protein</topology>
    </subcellularLocation>
</comment>
<comment type="similarity">
    <text evidence="3">Belongs to the PsaE family.</text>
</comment>
<protein>
    <recommendedName>
        <fullName>Photosystem I reaction center subunit IV</fullName>
    </recommendedName>
    <alternativeName>
        <fullName>Photosystem I 8.1 kDa protein</fullName>
    </alternativeName>
    <alternativeName>
        <fullName>p30 protein</fullName>
    </alternativeName>
</protein>
<gene>
    <name type="primary">psaE</name>
    <name type="ordered locus">ssr2831</name>
</gene>
<evidence type="ECO:0000250" key="1"/>
<evidence type="ECO:0000269" key="2">
    <source>
    </source>
</evidence>
<evidence type="ECO:0000305" key="3"/>
<evidence type="ECO:0007829" key="4">
    <source>
        <dbReference type="PDB" id="1GXI"/>
    </source>
</evidence>
<evidence type="ECO:0007829" key="5">
    <source>
        <dbReference type="PDB" id="5OY0"/>
    </source>
</evidence>
<accession>P12975</accession>
<accession>P74289</accession>
<reference key="1">
    <citation type="journal article" date="1989" name="J. Biol. Chem.">
        <title>Structure and targeted mutagenesis of the gene encoding 8-kDa subunit of photosystem I from the cyanobacterium Synechocystis sp. PCC 6803.</title>
        <authorList>
            <person name="Chitnis P.R."/>
            <person name="Reilly P.A."/>
            <person name="Miedel M.C."/>
            <person name="Nelson N."/>
        </authorList>
    </citation>
    <scope>NUCLEOTIDE SEQUENCE [GENOMIC DNA]</scope>
</reference>
<reference key="2">
    <citation type="journal article" date="1996" name="DNA Res.">
        <title>Sequence analysis of the genome of the unicellular cyanobacterium Synechocystis sp. strain PCC6803. II. Sequence determination of the entire genome and assignment of potential protein-coding regions.</title>
        <authorList>
            <person name="Kaneko T."/>
            <person name="Sato S."/>
            <person name="Kotani H."/>
            <person name="Tanaka A."/>
            <person name="Asamizu E."/>
            <person name="Nakamura Y."/>
            <person name="Miyajima N."/>
            <person name="Hirosawa M."/>
            <person name="Sugiura M."/>
            <person name="Sasamoto S."/>
            <person name="Kimura T."/>
            <person name="Hosouchi T."/>
            <person name="Matsuno A."/>
            <person name="Muraki A."/>
            <person name="Nakazaki N."/>
            <person name="Naruo K."/>
            <person name="Okumura S."/>
            <person name="Shimpo S."/>
            <person name="Takeuchi C."/>
            <person name="Wada T."/>
            <person name="Watanabe A."/>
            <person name="Yamada M."/>
            <person name="Yasuda M."/>
            <person name="Tabata S."/>
        </authorList>
    </citation>
    <scope>NUCLEOTIDE SEQUENCE [LARGE SCALE GENOMIC DNA]</scope>
    <source>
        <strain>ATCC 27184 / PCC 6803 / Kazusa</strain>
    </source>
</reference>
<reference key="3">
    <citation type="journal article" date="1990" name="FEBS Lett.">
        <title>Amino acid sequence of photosystem I subunit IV from the cyanobacterium Synechocystis PCC 6803.</title>
        <authorList>
            <person name="Rousseau F."/>
            <person name="Lagoutte B."/>
        </authorList>
    </citation>
    <scope>PROTEIN SEQUENCE OF 2-74</scope>
</reference>
<reference key="4">
    <citation type="journal article" date="1997" name="Electrophoresis">
        <title>Towards a proteome project of cyanobacterium Synechocystis sp. strain PCC6803: linking 130 protein spots with their respective genes.</title>
        <authorList>
            <person name="Sazuka T."/>
            <person name="Ohara O."/>
        </authorList>
    </citation>
    <scope>PROTEIN SEQUENCE OF 1-21</scope>
</reference>
<feature type="initiator methionine" description="Removed" evidence="2">
    <location>
        <position position="1"/>
    </location>
</feature>
<feature type="chain" id="PRO_0000204414" description="Photosystem I reaction center subunit IV">
    <location>
        <begin position="2"/>
        <end position="74"/>
    </location>
</feature>
<feature type="sequence conflict" description="In Ref. 1; AAA88629." evidence="3" ref="1">
    <original>R</original>
    <variation>S</variation>
    <location>
        <position position="10"/>
    </location>
</feature>
<feature type="sequence conflict" description="In Ref. 3; AA sequence." evidence="3" ref="3">
    <original>A</original>
    <variation>G</variation>
    <location>
        <position position="26"/>
    </location>
</feature>
<feature type="strand" evidence="5">
    <location>
        <begin position="8"/>
        <end position="11"/>
    </location>
</feature>
<feature type="strand" evidence="5">
    <location>
        <begin position="14"/>
        <end position="16"/>
    </location>
</feature>
<feature type="turn" evidence="4">
    <location>
        <begin position="17"/>
        <end position="20"/>
    </location>
</feature>
<feature type="strand" evidence="5">
    <location>
        <begin position="21"/>
        <end position="28"/>
    </location>
</feature>
<feature type="strand" evidence="4">
    <location>
        <begin position="33"/>
        <end position="35"/>
    </location>
</feature>
<feature type="strand" evidence="5">
    <location>
        <begin position="37"/>
        <end position="40"/>
    </location>
</feature>
<feature type="turn" evidence="4">
    <location>
        <begin position="48"/>
        <end position="50"/>
    </location>
</feature>
<feature type="strand" evidence="4">
    <location>
        <begin position="53"/>
        <end position="55"/>
    </location>
</feature>
<feature type="strand" evidence="5">
    <location>
        <begin position="58"/>
        <end position="61"/>
    </location>
</feature>
<feature type="helix" evidence="5">
    <location>
        <begin position="63"/>
        <end position="65"/>
    </location>
</feature>
<feature type="strand" evidence="5">
    <location>
        <begin position="66"/>
        <end position="68"/>
    </location>
</feature>
<dbReference type="EMBL" id="J05079">
    <property type="protein sequence ID" value="AAA88629.1"/>
    <property type="molecule type" value="Genomic_DNA"/>
</dbReference>
<dbReference type="EMBL" id="BA000022">
    <property type="protein sequence ID" value="BAA18383.1"/>
    <property type="molecule type" value="Genomic_DNA"/>
</dbReference>
<dbReference type="PIR" id="S75924">
    <property type="entry name" value="F1YB4"/>
</dbReference>
<dbReference type="PDB" id="1GXI">
    <property type="method" value="NMR"/>
    <property type="chains" value="E=2-74"/>
</dbReference>
<dbReference type="PDB" id="4KT0">
    <property type="method" value="X-ray"/>
    <property type="resolution" value="2.80 A"/>
    <property type="chains" value="E=1-74"/>
</dbReference>
<dbReference type="PDB" id="4L6V">
    <property type="method" value="X-ray"/>
    <property type="resolution" value="3.80 A"/>
    <property type="chains" value="5/E/e=1-74"/>
</dbReference>
<dbReference type="PDB" id="5OY0">
    <property type="method" value="X-ray"/>
    <property type="resolution" value="2.50 A"/>
    <property type="chains" value="5/E=2-70, e=2-69"/>
</dbReference>
<dbReference type="PDB" id="6HQB">
    <property type="method" value="X-ray"/>
    <property type="resolution" value="4.00 A"/>
    <property type="chains" value="E=2-70"/>
</dbReference>
<dbReference type="PDB" id="6NWA">
    <property type="method" value="EM"/>
    <property type="resolution" value="3.48 A"/>
    <property type="chains" value="E/P/e=1-74"/>
</dbReference>
<dbReference type="PDB" id="6UZV">
    <property type="method" value="EM"/>
    <property type="resolution" value="3.10 A"/>
    <property type="chains" value="5/E/e=1-74"/>
</dbReference>
<dbReference type="PDB" id="7O1V">
    <property type="method" value="EM"/>
    <property type="resolution" value="4.31 A"/>
    <property type="chains" value="E=2-70"/>
</dbReference>
<dbReference type="PDB" id="7UMH">
    <property type="method" value="EM"/>
    <property type="resolution" value="2.60 A"/>
    <property type="chains" value="E/O/e=1-74"/>
</dbReference>
<dbReference type="PDB" id="8AM5">
    <property type="method" value="EM"/>
    <property type="resolution" value="3.10 A"/>
    <property type="chains" value="e=1-74"/>
</dbReference>
<dbReference type="PDB" id="8ASL">
    <property type="method" value="EM"/>
    <property type="resolution" value="3.15 A"/>
    <property type="chains" value="e=1-74"/>
</dbReference>
<dbReference type="PDB" id="8ASP">
    <property type="method" value="EM"/>
    <property type="resolution" value="2.90 A"/>
    <property type="chains" value="e=1-74"/>
</dbReference>
<dbReference type="PDB" id="9AU4">
    <property type="method" value="EM"/>
    <property type="resolution" value="2.03 A"/>
    <property type="chains" value="E/P/e=1-74"/>
</dbReference>
<dbReference type="PDBsum" id="1GXI"/>
<dbReference type="PDBsum" id="4KT0"/>
<dbReference type="PDBsum" id="4L6V"/>
<dbReference type="PDBsum" id="5OY0"/>
<dbReference type="PDBsum" id="6HQB"/>
<dbReference type="PDBsum" id="6NWA"/>
<dbReference type="PDBsum" id="6UZV"/>
<dbReference type="PDBsum" id="7O1V"/>
<dbReference type="PDBsum" id="7UMH"/>
<dbReference type="PDBsum" id="8AM5"/>
<dbReference type="PDBsum" id="8ASL"/>
<dbReference type="PDBsum" id="8ASP"/>
<dbReference type="PDBsum" id="9AU4"/>
<dbReference type="BMRB" id="P12975"/>
<dbReference type="EMDB" id="EMD-0524"/>
<dbReference type="EMDB" id="EMD-12697"/>
<dbReference type="EMDB" id="EMD-15522"/>
<dbReference type="EMDB" id="EMD-15618"/>
<dbReference type="EMDB" id="EMD-15621"/>
<dbReference type="EMDB" id="EMD-20963"/>
<dbReference type="EMDB" id="EMD-26601"/>
<dbReference type="EMDB" id="EMD-43843"/>
<dbReference type="SMR" id="P12975"/>
<dbReference type="IntAct" id="P12975">
    <property type="interactions" value="4"/>
</dbReference>
<dbReference type="STRING" id="1148.gene:10499259"/>
<dbReference type="PaxDb" id="1148-1653469"/>
<dbReference type="EnsemblBacteria" id="BAA18383">
    <property type="protein sequence ID" value="BAA18383"/>
    <property type="gene ID" value="BAA18383"/>
</dbReference>
<dbReference type="KEGG" id="syn:ssr2831"/>
<dbReference type="eggNOG" id="ENOG503313D">
    <property type="taxonomic scope" value="Bacteria"/>
</dbReference>
<dbReference type="InParanoid" id="P12975"/>
<dbReference type="PhylomeDB" id="P12975"/>
<dbReference type="BioCyc" id="MetaCyc:PSAE-MONOMER"/>
<dbReference type="EvolutionaryTrace" id="P12975"/>
<dbReference type="Proteomes" id="UP000001425">
    <property type="component" value="Chromosome"/>
</dbReference>
<dbReference type="GO" id="GO:0009538">
    <property type="term" value="C:photosystem I reaction center"/>
    <property type="evidence" value="ECO:0007669"/>
    <property type="project" value="InterPro"/>
</dbReference>
<dbReference type="GO" id="GO:0031676">
    <property type="term" value="C:plasma membrane-derived thylakoid membrane"/>
    <property type="evidence" value="ECO:0007669"/>
    <property type="project" value="UniProtKB-SubCell"/>
</dbReference>
<dbReference type="GO" id="GO:0015979">
    <property type="term" value="P:photosynthesis"/>
    <property type="evidence" value="ECO:0007669"/>
    <property type="project" value="UniProtKB-UniRule"/>
</dbReference>
<dbReference type="Gene3D" id="2.30.30.50">
    <property type="match status" value="1"/>
</dbReference>
<dbReference type="HAMAP" id="MF_00613">
    <property type="entry name" value="PSI_PsaE"/>
    <property type="match status" value="1"/>
</dbReference>
<dbReference type="InterPro" id="IPR008990">
    <property type="entry name" value="Elect_transpt_acc-like_dom_sf"/>
</dbReference>
<dbReference type="InterPro" id="IPR003375">
    <property type="entry name" value="PSI_PsaE"/>
</dbReference>
<dbReference type="NCBIfam" id="NF002745">
    <property type="entry name" value="PRK02749.1"/>
    <property type="match status" value="1"/>
</dbReference>
<dbReference type="PANTHER" id="PTHR34549">
    <property type="entry name" value="PHOTOSYSTEM I REACTION CENTER SUBUNIT IV A, CHLOROPLASTIC-RELATED"/>
    <property type="match status" value="1"/>
</dbReference>
<dbReference type="PANTHER" id="PTHR34549:SF2">
    <property type="entry name" value="PHOTOSYSTEM I SUBUNIT IV"/>
    <property type="match status" value="1"/>
</dbReference>
<dbReference type="Pfam" id="PF02427">
    <property type="entry name" value="PSI_PsaE"/>
    <property type="match status" value="1"/>
</dbReference>
<dbReference type="SUPFAM" id="SSF50090">
    <property type="entry name" value="Electron transport accessory proteins"/>
    <property type="match status" value="1"/>
</dbReference>
<proteinExistence type="evidence at protein level"/>
<organism>
    <name type="scientific">Synechocystis sp. (strain ATCC 27184 / PCC 6803 / Kazusa)</name>
    <dbReference type="NCBI Taxonomy" id="1111708"/>
    <lineage>
        <taxon>Bacteria</taxon>
        <taxon>Bacillati</taxon>
        <taxon>Cyanobacteriota</taxon>
        <taxon>Cyanophyceae</taxon>
        <taxon>Synechococcales</taxon>
        <taxon>Merismopediaceae</taxon>
        <taxon>Synechocystis</taxon>
    </lineage>
</organism>
<sequence>MALNRGDKVRIKRTESYWYGDVGTVASVEKSGILYPVIVRFDRVNYNGFSGSASGVNTNNFAENELELVQAAAK</sequence>
<keyword id="KW-0002">3D-structure</keyword>
<keyword id="KW-0903">Direct protein sequencing</keyword>
<keyword id="KW-0472">Membrane</keyword>
<keyword id="KW-0602">Photosynthesis</keyword>
<keyword id="KW-0603">Photosystem I</keyword>
<keyword id="KW-1185">Reference proteome</keyword>
<keyword id="KW-0793">Thylakoid</keyword>
<name>PSAE_SYNY3</name>